<protein>
    <recommendedName>
        <fullName>NADH dehydrogenase [ubiquinone] 1 beta subcomplex subunit 5, mitochondrial</fullName>
    </recommendedName>
    <alternativeName>
        <fullName>Complex I-SGDH</fullName>
        <shortName>CI-SGDH</shortName>
    </alternativeName>
    <alternativeName>
        <fullName>NADH-ubiquinone oxidoreductase SGDH subunit</fullName>
    </alternativeName>
</protein>
<sequence length="189" mass="21589">MAAMSLLHRASVSAVAALSGRRLGTRLGFGGFLTRDFPKTVAPVRHSGDHGKRLFIIKPSGFYDKRFLKLLRFYILLTGIPVAIGITLINVFIGEAELAEIPEGYVPEHWEYFKHPISRWIARTFFDGPEKNYERTMAILQIEAEKAELRLKELEVRRLMRARGDGPWFHYPTIDKELIDHSPKATPDN</sequence>
<accession>Q02380</accession>
<accession>Q3SZV4</accession>
<accession>Q56K08</accession>
<organism>
    <name type="scientific">Bos taurus</name>
    <name type="common">Bovine</name>
    <dbReference type="NCBI Taxonomy" id="9913"/>
    <lineage>
        <taxon>Eukaryota</taxon>
        <taxon>Metazoa</taxon>
        <taxon>Chordata</taxon>
        <taxon>Craniata</taxon>
        <taxon>Vertebrata</taxon>
        <taxon>Euteleostomi</taxon>
        <taxon>Mammalia</taxon>
        <taxon>Eutheria</taxon>
        <taxon>Laurasiatheria</taxon>
        <taxon>Artiodactyla</taxon>
        <taxon>Ruminantia</taxon>
        <taxon>Pecora</taxon>
        <taxon>Bovidae</taxon>
        <taxon>Bovinae</taxon>
        <taxon>Bos</taxon>
    </lineage>
</organism>
<keyword id="KW-0002">3D-structure</keyword>
<keyword id="KW-0903">Direct protein sequencing</keyword>
<keyword id="KW-0249">Electron transport</keyword>
<keyword id="KW-0472">Membrane</keyword>
<keyword id="KW-0496">Mitochondrion</keyword>
<keyword id="KW-0999">Mitochondrion inner membrane</keyword>
<keyword id="KW-1185">Reference proteome</keyword>
<keyword id="KW-0679">Respiratory chain</keyword>
<keyword id="KW-0809">Transit peptide</keyword>
<keyword id="KW-0812">Transmembrane</keyword>
<keyword id="KW-1133">Transmembrane helix</keyword>
<keyword id="KW-0813">Transport</keyword>
<name>NDUB5_BOVIN</name>
<feature type="transit peptide" description="Mitochondrion">
    <location>
        <begin position="1"/>
        <end position="46"/>
    </location>
</feature>
<feature type="chain" id="PRO_0000020051" description="NADH dehydrogenase [ubiquinone] 1 beta subcomplex subunit 5, mitochondrial">
    <location>
        <begin position="47"/>
        <end position="189"/>
    </location>
</feature>
<feature type="transmembrane region" description="Helical" evidence="2">
    <location>
        <begin position="73"/>
        <end position="93"/>
    </location>
</feature>
<feature type="sequence conflict" description="In Ref. 2; AAW82087." evidence="6" ref="2">
    <original>R</original>
    <variation>T</variation>
    <location>
        <position position="72"/>
    </location>
</feature>
<feature type="strand" evidence="10">
    <location>
        <begin position="49"/>
        <end position="51"/>
    </location>
</feature>
<feature type="helix" evidence="9">
    <location>
        <begin position="62"/>
        <end position="92"/>
    </location>
</feature>
<feature type="strand" evidence="9">
    <location>
        <begin position="97"/>
        <end position="99"/>
    </location>
</feature>
<feature type="helix" evidence="9">
    <location>
        <begin position="109"/>
        <end position="112"/>
    </location>
</feature>
<feature type="helix" evidence="9">
    <location>
        <begin position="116"/>
        <end position="125"/>
    </location>
</feature>
<feature type="helix" evidence="9">
    <location>
        <begin position="129"/>
        <end position="163"/>
    </location>
</feature>
<feature type="strand" evidence="9">
    <location>
        <begin position="166"/>
        <end position="169"/>
    </location>
</feature>
<feature type="helix" evidence="9">
    <location>
        <begin position="176"/>
        <end position="178"/>
    </location>
</feature>
<feature type="strand" evidence="9">
    <location>
        <begin position="185"/>
        <end position="187"/>
    </location>
</feature>
<reference key="1">
    <citation type="journal article" date="1992" name="J. Mol. Biol.">
        <title>Sequences of 20 subunits of NADH:ubiquinone oxidoreductase from bovine heart mitochondria. Application of a novel strategy for sequencing proteins using the polymerase chain reaction.</title>
        <authorList>
            <person name="Walker J.E."/>
            <person name="Arizmendi J.M."/>
            <person name="Dupuis A."/>
            <person name="Fearnley I.M."/>
            <person name="Finel M."/>
            <person name="Medd S.M."/>
            <person name="Pilkington S.J."/>
            <person name="Runswick M.J."/>
            <person name="Skehel J.M."/>
        </authorList>
    </citation>
    <scope>NUCLEOTIDE SEQUENCE [MRNA]</scope>
    <scope>PARTIAL PROTEIN SEQUENCE</scope>
    <source>
        <tissue>Heart</tissue>
    </source>
</reference>
<reference key="2">
    <citation type="submission" date="2005-01" db="EMBL/GenBank/DDBJ databases">
        <title>Analysis of sequences obtained from constructed full-length bovine cDNA libraries.</title>
        <authorList>
            <person name="Yu J."/>
            <person name="Meng Y."/>
            <person name="Wang Z."/>
            <person name="Hansen C."/>
            <person name="Li C."/>
            <person name="Moore S.S."/>
        </authorList>
    </citation>
    <scope>NUCLEOTIDE SEQUENCE [LARGE SCALE MRNA]</scope>
    <source>
        <tissue>Lymphoid epithelium</tissue>
    </source>
</reference>
<reference key="3">
    <citation type="submission" date="2005-08" db="EMBL/GenBank/DDBJ databases">
        <authorList>
            <consortium name="NIH - Mammalian Gene Collection (MGC) project"/>
        </authorList>
    </citation>
    <scope>NUCLEOTIDE SEQUENCE [LARGE SCALE MRNA]</scope>
    <source>
        <strain>Hereford</strain>
        <tissue>Testis</tissue>
    </source>
</reference>
<reference key="4">
    <citation type="journal article" date="2000" name="Biochemistry">
        <title>Resolution of the membrane domain of bovine complex I into subcomplexes: implications for the structural organization of the enzyme.</title>
        <authorList>
            <person name="Sazanov L.A."/>
            <person name="Peak-Chew S.Y."/>
            <person name="Fearnley I.M."/>
            <person name="Walker J.E."/>
        </authorList>
    </citation>
    <scope>PARTIAL PROTEIN SEQUENCE</scope>
    <scope>SUBUNIT</scope>
    <scope>IDENTIFICATION IN COMPLEX I</scope>
    <scope>SUBCELLULAR LOCATION</scope>
</reference>
<reference key="5">
    <citation type="journal article" date="2008" name="Anal. Biochem.">
        <title>Subunit analysis of bovine heart complex I by reversed-phase high-performance liquid chromatography, electrospray ionization-tandem mass spectrometry, and matrix-assisted laser desorption/ionization-time-of-flight mass spectrometry.</title>
        <authorList>
            <person name="Lemma-Gray P."/>
            <person name="Valusova E."/>
            <person name="Carroll C.A."/>
            <person name="Weintraub S.T."/>
            <person name="Musatov A."/>
            <person name="Robinson N.C."/>
        </authorList>
    </citation>
    <scope>SUBUNIT</scope>
    <scope>IDENTIFICATION IN COMPLEX I</scope>
    <scope>SUBCELLULAR LOCATION</scope>
</reference>
<comment type="function">
    <text evidence="1">Accessory subunit of the mitochondrial membrane respiratory chain NADH dehydrogenase (Complex I), that is believed not to be involved in catalysis. Complex I functions in the transfer of electrons from NADH to the respiratory chain. The immediate electron acceptor for the enzyme is believed to be ubiquinone.</text>
</comment>
<comment type="subunit">
    <text evidence="3 4 5">Complex I is composed of 45 different subunits.</text>
</comment>
<comment type="subcellular location">
    <subcellularLocation>
        <location evidence="7 8">Mitochondrion inner membrane</location>
        <topology evidence="2">Single-pass membrane protein</topology>
        <orientation evidence="6">Matrix side</orientation>
    </subcellularLocation>
</comment>
<comment type="similarity">
    <text evidence="6">Belongs to the complex I NDUFB5 subunit family.</text>
</comment>
<evidence type="ECO:0000250" key="1">
    <source>
        <dbReference type="UniProtKB" id="O43674"/>
    </source>
</evidence>
<evidence type="ECO:0000255" key="2"/>
<evidence type="ECO:0000269" key="3">
    <source>
    </source>
</evidence>
<evidence type="ECO:0000269" key="4">
    <source>
    </source>
</evidence>
<evidence type="ECO:0000269" key="5">
    <source>
    </source>
</evidence>
<evidence type="ECO:0000305" key="6"/>
<evidence type="ECO:0000305" key="7">
    <source>
    </source>
</evidence>
<evidence type="ECO:0000305" key="8">
    <source>
    </source>
</evidence>
<evidence type="ECO:0007829" key="9">
    <source>
        <dbReference type="PDB" id="7QSM"/>
    </source>
</evidence>
<evidence type="ECO:0007829" key="10">
    <source>
        <dbReference type="PDB" id="7QSO"/>
    </source>
</evidence>
<dbReference type="EMBL" id="X63208">
    <property type="protein sequence ID" value="CAA44893.1"/>
    <property type="molecule type" value="mRNA"/>
</dbReference>
<dbReference type="EMBL" id="AY911319">
    <property type="protein sequence ID" value="AAW82087.1"/>
    <property type="molecule type" value="mRNA"/>
</dbReference>
<dbReference type="EMBL" id="BC102690">
    <property type="protein sequence ID" value="AAI02691.1"/>
    <property type="molecule type" value="mRNA"/>
</dbReference>
<dbReference type="PIR" id="S28254">
    <property type="entry name" value="S28254"/>
</dbReference>
<dbReference type="RefSeq" id="NP_788829.1">
    <property type="nucleotide sequence ID" value="NM_176656.4"/>
</dbReference>
<dbReference type="PDB" id="5LC5">
    <property type="method" value="EM"/>
    <property type="resolution" value="4.35 A"/>
    <property type="chains" value="h=1-91"/>
</dbReference>
<dbReference type="PDB" id="5LDW">
    <property type="method" value="EM"/>
    <property type="resolution" value="4.27 A"/>
    <property type="chains" value="h=53-91"/>
</dbReference>
<dbReference type="PDB" id="5LDX">
    <property type="method" value="EM"/>
    <property type="resolution" value="5.60 A"/>
    <property type="chains" value="h=53-91"/>
</dbReference>
<dbReference type="PDB" id="5O31">
    <property type="method" value="EM"/>
    <property type="resolution" value="4.13 A"/>
    <property type="chains" value="h=47-189"/>
</dbReference>
<dbReference type="PDB" id="7DGQ">
    <property type="method" value="EM"/>
    <property type="resolution" value="5.00 A"/>
    <property type="chains" value="b=47-189"/>
</dbReference>
<dbReference type="PDB" id="7DGR">
    <property type="method" value="EM"/>
    <property type="resolution" value="4.60 A"/>
    <property type="chains" value="b=47-189"/>
</dbReference>
<dbReference type="PDB" id="7DGS">
    <property type="method" value="EM"/>
    <property type="resolution" value="7.80 A"/>
    <property type="chains" value="b=47-189"/>
</dbReference>
<dbReference type="PDB" id="7DGZ">
    <property type="method" value="EM"/>
    <property type="resolution" value="3.80 A"/>
    <property type="chains" value="b=47-189"/>
</dbReference>
<dbReference type="PDB" id="7DH0">
    <property type="method" value="EM"/>
    <property type="resolution" value="4.20 A"/>
    <property type="chains" value="b=47-189"/>
</dbReference>
<dbReference type="PDB" id="7DKF">
    <property type="method" value="EM"/>
    <property type="resolution" value="8.30 A"/>
    <property type="chains" value="b2=47-189"/>
</dbReference>
<dbReference type="PDB" id="7QSD">
    <property type="method" value="EM"/>
    <property type="resolution" value="3.10 A"/>
    <property type="chains" value="h=1-189"/>
</dbReference>
<dbReference type="PDB" id="7QSK">
    <property type="method" value="EM"/>
    <property type="resolution" value="2.84 A"/>
    <property type="chains" value="h=1-189"/>
</dbReference>
<dbReference type="PDB" id="7QSL">
    <property type="method" value="EM"/>
    <property type="resolution" value="2.76 A"/>
    <property type="chains" value="h=1-189"/>
</dbReference>
<dbReference type="PDB" id="7QSM">
    <property type="method" value="EM"/>
    <property type="resolution" value="2.30 A"/>
    <property type="chains" value="h=1-189"/>
</dbReference>
<dbReference type="PDB" id="7QSN">
    <property type="method" value="EM"/>
    <property type="resolution" value="2.81 A"/>
    <property type="chains" value="h=1-189"/>
</dbReference>
<dbReference type="PDB" id="7QSO">
    <property type="method" value="EM"/>
    <property type="resolution" value="3.02 A"/>
    <property type="chains" value="h=1-189"/>
</dbReference>
<dbReference type="PDB" id="7R41">
    <property type="method" value="EM"/>
    <property type="resolution" value="2.30 A"/>
    <property type="chains" value="h=1-189"/>
</dbReference>
<dbReference type="PDB" id="7R42">
    <property type="method" value="EM"/>
    <property type="resolution" value="2.30 A"/>
    <property type="chains" value="h=1-189"/>
</dbReference>
<dbReference type="PDB" id="7R43">
    <property type="method" value="EM"/>
    <property type="resolution" value="2.40 A"/>
    <property type="chains" value="h=1-189"/>
</dbReference>
<dbReference type="PDB" id="7R44">
    <property type="method" value="EM"/>
    <property type="resolution" value="2.40 A"/>
    <property type="chains" value="h=1-189"/>
</dbReference>
<dbReference type="PDB" id="7R45">
    <property type="method" value="EM"/>
    <property type="resolution" value="2.40 A"/>
    <property type="chains" value="h=1-189"/>
</dbReference>
<dbReference type="PDB" id="7R46">
    <property type="method" value="EM"/>
    <property type="resolution" value="2.40 A"/>
    <property type="chains" value="h=1-189"/>
</dbReference>
<dbReference type="PDB" id="7R47">
    <property type="method" value="EM"/>
    <property type="resolution" value="2.30 A"/>
    <property type="chains" value="h=1-189"/>
</dbReference>
<dbReference type="PDB" id="7R48">
    <property type="method" value="EM"/>
    <property type="resolution" value="2.30 A"/>
    <property type="chains" value="h=1-189"/>
</dbReference>
<dbReference type="PDB" id="7R4C">
    <property type="method" value="EM"/>
    <property type="resolution" value="2.30 A"/>
    <property type="chains" value="h=1-189"/>
</dbReference>
<dbReference type="PDB" id="7R4D">
    <property type="method" value="EM"/>
    <property type="resolution" value="2.30 A"/>
    <property type="chains" value="h=1-189"/>
</dbReference>
<dbReference type="PDB" id="7R4F">
    <property type="method" value="EM"/>
    <property type="resolution" value="2.40 A"/>
    <property type="chains" value="h=1-189"/>
</dbReference>
<dbReference type="PDB" id="7R4G">
    <property type="method" value="EM"/>
    <property type="resolution" value="2.50 A"/>
    <property type="chains" value="h=1-189"/>
</dbReference>
<dbReference type="PDB" id="8Q0A">
    <property type="method" value="EM"/>
    <property type="resolution" value="3.10 A"/>
    <property type="chains" value="h=1-189"/>
</dbReference>
<dbReference type="PDB" id="8Q0F">
    <property type="method" value="EM"/>
    <property type="resolution" value="3.10 A"/>
    <property type="chains" value="h=1-189"/>
</dbReference>
<dbReference type="PDB" id="8Q0J">
    <property type="method" value="EM"/>
    <property type="resolution" value="3.80 A"/>
    <property type="chains" value="h=1-189"/>
</dbReference>
<dbReference type="PDB" id="8Q0M">
    <property type="method" value="EM"/>
    <property type="resolution" value="3.10 A"/>
    <property type="chains" value="h=1-189"/>
</dbReference>
<dbReference type="PDB" id="8Q0O">
    <property type="method" value="EM"/>
    <property type="resolution" value="3.10 A"/>
    <property type="chains" value="h=1-189"/>
</dbReference>
<dbReference type="PDB" id="8Q0Q">
    <property type="method" value="EM"/>
    <property type="resolution" value="3.60 A"/>
    <property type="chains" value="h=1-189"/>
</dbReference>
<dbReference type="PDB" id="8Q1P">
    <property type="method" value="EM"/>
    <property type="resolution" value="2.90 A"/>
    <property type="chains" value="h=1-189"/>
</dbReference>
<dbReference type="PDB" id="8Q1U">
    <property type="method" value="EM"/>
    <property type="resolution" value="3.30 A"/>
    <property type="chains" value="h=1-189"/>
</dbReference>
<dbReference type="PDB" id="8Q1Y">
    <property type="method" value="EM"/>
    <property type="resolution" value="2.60 A"/>
    <property type="chains" value="h=1-189"/>
</dbReference>
<dbReference type="PDB" id="8Q25">
    <property type="method" value="EM"/>
    <property type="resolution" value="2.80 A"/>
    <property type="chains" value="h=1-189"/>
</dbReference>
<dbReference type="PDB" id="8Q45">
    <property type="method" value="EM"/>
    <property type="resolution" value="2.70 A"/>
    <property type="chains" value="h=1-189"/>
</dbReference>
<dbReference type="PDB" id="8Q46">
    <property type="method" value="EM"/>
    <property type="resolution" value="2.60 A"/>
    <property type="chains" value="h=1-189"/>
</dbReference>
<dbReference type="PDB" id="8Q47">
    <property type="method" value="EM"/>
    <property type="resolution" value="2.90 A"/>
    <property type="chains" value="h=1-189"/>
</dbReference>
<dbReference type="PDB" id="8Q48">
    <property type="method" value="EM"/>
    <property type="resolution" value="2.50 A"/>
    <property type="chains" value="h=1-189"/>
</dbReference>
<dbReference type="PDB" id="8Q49">
    <property type="method" value="EM"/>
    <property type="resolution" value="2.60 A"/>
    <property type="chains" value="h=1-189"/>
</dbReference>
<dbReference type="PDB" id="8Q4A">
    <property type="method" value="EM"/>
    <property type="resolution" value="2.60 A"/>
    <property type="chains" value="h=1-189"/>
</dbReference>
<dbReference type="PDBsum" id="5LC5"/>
<dbReference type="PDBsum" id="5LDW"/>
<dbReference type="PDBsum" id="5LDX"/>
<dbReference type="PDBsum" id="5O31"/>
<dbReference type="PDBsum" id="7DGQ"/>
<dbReference type="PDBsum" id="7DGR"/>
<dbReference type="PDBsum" id="7DGS"/>
<dbReference type="PDBsum" id="7DGZ"/>
<dbReference type="PDBsum" id="7DH0"/>
<dbReference type="PDBsum" id="7DKF"/>
<dbReference type="PDBsum" id="7QSD"/>
<dbReference type="PDBsum" id="7QSK"/>
<dbReference type="PDBsum" id="7QSL"/>
<dbReference type="PDBsum" id="7QSM"/>
<dbReference type="PDBsum" id="7QSN"/>
<dbReference type="PDBsum" id="7QSO"/>
<dbReference type="PDBsum" id="7R41"/>
<dbReference type="PDBsum" id="7R42"/>
<dbReference type="PDBsum" id="7R43"/>
<dbReference type="PDBsum" id="7R44"/>
<dbReference type="PDBsum" id="7R45"/>
<dbReference type="PDBsum" id="7R46"/>
<dbReference type="PDBsum" id="7R47"/>
<dbReference type="PDBsum" id="7R48"/>
<dbReference type="PDBsum" id="7R4C"/>
<dbReference type="PDBsum" id="7R4D"/>
<dbReference type="PDBsum" id="7R4F"/>
<dbReference type="PDBsum" id="7R4G"/>
<dbReference type="PDBsum" id="8Q0A"/>
<dbReference type="PDBsum" id="8Q0F"/>
<dbReference type="PDBsum" id="8Q0J"/>
<dbReference type="PDBsum" id="8Q0M"/>
<dbReference type="PDBsum" id="8Q0O"/>
<dbReference type="PDBsum" id="8Q0Q"/>
<dbReference type="PDBsum" id="8Q1P"/>
<dbReference type="PDBsum" id="8Q1U"/>
<dbReference type="PDBsum" id="8Q1Y"/>
<dbReference type="PDBsum" id="8Q25"/>
<dbReference type="PDBsum" id="8Q45"/>
<dbReference type="PDBsum" id="8Q46"/>
<dbReference type="PDBsum" id="8Q47"/>
<dbReference type="PDBsum" id="8Q48"/>
<dbReference type="PDBsum" id="8Q49"/>
<dbReference type="PDBsum" id="8Q4A"/>
<dbReference type="EMDB" id="EMD-14127"/>
<dbReference type="EMDB" id="EMD-14132"/>
<dbReference type="EMDB" id="EMD-14133"/>
<dbReference type="EMDB" id="EMD-14134"/>
<dbReference type="EMDB" id="EMD-14139"/>
<dbReference type="EMDB" id="EMD-14140"/>
<dbReference type="EMDB" id="EMD-14251"/>
<dbReference type="EMDB" id="EMD-14256"/>
<dbReference type="EMDB" id="EMD-14261"/>
<dbReference type="EMDB" id="EMD-14266"/>
<dbReference type="EMDB" id="EMD-14272"/>
<dbReference type="EMDB" id="EMD-14277"/>
<dbReference type="EMDB" id="EMD-14282"/>
<dbReference type="EMDB" id="EMD-14287"/>
<dbReference type="EMDB" id="EMD-14292"/>
<dbReference type="EMDB" id="EMD-14297"/>
<dbReference type="EMDB" id="EMD-14302"/>
<dbReference type="EMDB" id="EMD-14307"/>
<dbReference type="EMDB" id="EMD-18051"/>
<dbReference type="EMDB" id="EMD-18052"/>
<dbReference type="EMDB" id="EMD-18054"/>
<dbReference type="EMDB" id="EMD-18055"/>
<dbReference type="EMDB" id="EMD-18057"/>
<dbReference type="EMDB" id="EMD-18059"/>
<dbReference type="EMDB" id="EMD-18066"/>
<dbReference type="EMDB" id="EMD-18067"/>
<dbReference type="EMDB" id="EMD-18068"/>
<dbReference type="EMDB" id="EMD-18069"/>
<dbReference type="EMDB" id="EMD-18138"/>
<dbReference type="EMDB" id="EMD-18139"/>
<dbReference type="EMDB" id="EMD-18140"/>
<dbReference type="EMDB" id="EMD-18141"/>
<dbReference type="EMDB" id="EMD-18142"/>
<dbReference type="EMDB" id="EMD-18143"/>
<dbReference type="EMDB" id="EMD-30673"/>
<dbReference type="EMDB" id="EMD-30674"/>
<dbReference type="EMDB" id="EMD-30675"/>
<dbReference type="EMDB" id="EMD-30676"/>
<dbReference type="EMDB" id="EMD-30677"/>
<dbReference type="EMDB" id="EMD-30706"/>
<dbReference type="EMDB" id="EMD-3731"/>
<dbReference type="EMDB" id="EMD-4032"/>
<dbReference type="EMDB" id="EMD-4040"/>
<dbReference type="EMDB" id="EMD-4041"/>
<dbReference type="SMR" id="Q02380"/>
<dbReference type="CORUM" id="Q02380"/>
<dbReference type="DIP" id="DIP-38825N"/>
<dbReference type="FunCoup" id="Q02380">
    <property type="interactions" value="2355"/>
</dbReference>
<dbReference type="IntAct" id="Q02380">
    <property type="interactions" value="2"/>
</dbReference>
<dbReference type="STRING" id="9913.ENSBTAP00000003197"/>
<dbReference type="TCDB" id="3.D.1.6.1">
    <property type="family name" value="the h+ or na+-translocating nadh dehydrogenase (ndh) family"/>
</dbReference>
<dbReference type="GlyGen" id="Q02380">
    <property type="glycosylation" value="1 site, 1 O-linked glycan (1 site)"/>
</dbReference>
<dbReference type="PaxDb" id="9913-ENSBTAP00000003197"/>
<dbReference type="Ensembl" id="ENSBTAT00000003197.6">
    <property type="protein sequence ID" value="ENSBTAP00000003197.5"/>
    <property type="gene ID" value="ENSBTAG00000002463.7"/>
</dbReference>
<dbReference type="GeneID" id="338061"/>
<dbReference type="KEGG" id="bta:338061"/>
<dbReference type="CTD" id="4711"/>
<dbReference type="VEuPathDB" id="HostDB:ENSBTAG00000002463"/>
<dbReference type="VGNC" id="VGNC:31964">
    <property type="gene designation" value="NDUFB5"/>
</dbReference>
<dbReference type="eggNOG" id="KOG4632">
    <property type="taxonomic scope" value="Eukaryota"/>
</dbReference>
<dbReference type="GeneTree" id="ENSGT00390000009980"/>
<dbReference type="HOGENOM" id="CLU_100260_2_0_1"/>
<dbReference type="InParanoid" id="Q02380"/>
<dbReference type="OMA" id="HHHMTIK"/>
<dbReference type="OrthoDB" id="9995605at2759"/>
<dbReference type="TreeFam" id="TF313997"/>
<dbReference type="Reactome" id="R-BTA-611105">
    <property type="pathway name" value="Respiratory electron transport"/>
</dbReference>
<dbReference type="Reactome" id="R-BTA-6799198">
    <property type="pathway name" value="Complex I biogenesis"/>
</dbReference>
<dbReference type="Proteomes" id="UP000009136">
    <property type="component" value="Chromosome 1"/>
</dbReference>
<dbReference type="Bgee" id="ENSBTAG00000002463">
    <property type="expression patterns" value="Expressed in tongue muscle and 104 other cell types or tissues"/>
</dbReference>
<dbReference type="GO" id="GO:0005743">
    <property type="term" value="C:mitochondrial inner membrane"/>
    <property type="evidence" value="ECO:0007669"/>
    <property type="project" value="UniProtKB-SubCell"/>
</dbReference>
<dbReference type="GO" id="GO:0005739">
    <property type="term" value="C:mitochondrion"/>
    <property type="evidence" value="ECO:0000305"/>
    <property type="project" value="UniProtKB"/>
</dbReference>
<dbReference type="GO" id="GO:0005654">
    <property type="term" value="C:nucleoplasm"/>
    <property type="evidence" value="ECO:0007669"/>
    <property type="project" value="Ensembl"/>
</dbReference>
<dbReference type="GO" id="GO:0045271">
    <property type="term" value="C:respiratory chain complex I"/>
    <property type="evidence" value="ECO:0000314"/>
    <property type="project" value="UniProtKB"/>
</dbReference>
<dbReference type="InterPro" id="IPR019173">
    <property type="entry name" value="NADH_UbQ_OxRdtase_B5_su"/>
</dbReference>
<dbReference type="PANTHER" id="PTHR13178:SF0">
    <property type="entry name" value="NADH DEHYDROGENASE [UBIQUINONE] 1 BETA SUBCOMPLEX SUBUNIT 5, MITOCHONDRIAL"/>
    <property type="match status" value="1"/>
</dbReference>
<dbReference type="PANTHER" id="PTHR13178">
    <property type="entry name" value="NADH-UBIQUINONE OXIDOREDUCTASE SGDH SUBUNIT"/>
    <property type="match status" value="1"/>
</dbReference>
<dbReference type="Pfam" id="PF09781">
    <property type="entry name" value="NDUF_B5"/>
    <property type="match status" value="1"/>
</dbReference>
<gene>
    <name type="primary">NDUFB5</name>
</gene>
<proteinExistence type="evidence at protein level"/>